<organism>
    <name type="scientific">Escherichia fergusonii (strain ATCC 35469 / DSM 13698 / CCUG 18766 / IAM 14443 / JCM 21226 / LMG 7866 / NBRC 102419 / NCTC 12128 / CDC 0568-73)</name>
    <dbReference type="NCBI Taxonomy" id="585054"/>
    <lineage>
        <taxon>Bacteria</taxon>
        <taxon>Pseudomonadati</taxon>
        <taxon>Pseudomonadota</taxon>
        <taxon>Gammaproteobacteria</taxon>
        <taxon>Enterobacterales</taxon>
        <taxon>Enterobacteriaceae</taxon>
        <taxon>Escherichia</taxon>
    </lineage>
</organism>
<evidence type="ECO:0000255" key="1">
    <source>
        <dbReference type="HAMAP-Rule" id="MF_00549"/>
    </source>
</evidence>
<accession>B7LNX3</accession>
<keyword id="KW-0456">Lyase</keyword>
<name>MGSA_ESCF3</name>
<feature type="chain" id="PRO_1000128995" description="Methylglyoxal synthase">
    <location>
        <begin position="1"/>
        <end position="152"/>
    </location>
</feature>
<feature type="domain" description="MGS-like" evidence="1">
    <location>
        <begin position="6"/>
        <end position="152"/>
    </location>
</feature>
<feature type="active site" description="Proton donor/acceptor" evidence="1">
    <location>
        <position position="71"/>
    </location>
</feature>
<feature type="binding site" evidence="1">
    <location>
        <position position="19"/>
    </location>
    <ligand>
        <name>substrate</name>
    </ligand>
</feature>
<feature type="binding site" evidence="1">
    <location>
        <position position="23"/>
    </location>
    <ligand>
        <name>substrate</name>
    </ligand>
</feature>
<feature type="binding site" evidence="1">
    <location>
        <begin position="45"/>
        <end position="48"/>
    </location>
    <ligand>
        <name>substrate</name>
    </ligand>
</feature>
<feature type="binding site" evidence="1">
    <location>
        <begin position="65"/>
        <end position="66"/>
    </location>
    <ligand>
        <name>substrate</name>
    </ligand>
</feature>
<feature type="binding site" evidence="1">
    <location>
        <position position="98"/>
    </location>
    <ligand>
        <name>substrate</name>
    </ligand>
</feature>
<comment type="function">
    <text evidence="1">Catalyzes the formation of methylglyoxal from dihydroxyacetone phosphate.</text>
</comment>
<comment type="catalytic activity">
    <reaction evidence="1">
        <text>dihydroxyacetone phosphate = methylglyoxal + phosphate</text>
        <dbReference type="Rhea" id="RHEA:17937"/>
        <dbReference type="ChEBI" id="CHEBI:17158"/>
        <dbReference type="ChEBI" id="CHEBI:43474"/>
        <dbReference type="ChEBI" id="CHEBI:57642"/>
        <dbReference type="EC" id="4.2.3.3"/>
    </reaction>
</comment>
<comment type="similarity">
    <text evidence="1">Belongs to the methylglyoxal synthase family.</text>
</comment>
<gene>
    <name evidence="1" type="primary">mgsA</name>
    <name type="ordered locus">EFER_1100</name>
</gene>
<reference key="1">
    <citation type="journal article" date="2009" name="PLoS Genet.">
        <title>Organised genome dynamics in the Escherichia coli species results in highly diverse adaptive paths.</title>
        <authorList>
            <person name="Touchon M."/>
            <person name="Hoede C."/>
            <person name="Tenaillon O."/>
            <person name="Barbe V."/>
            <person name="Baeriswyl S."/>
            <person name="Bidet P."/>
            <person name="Bingen E."/>
            <person name="Bonacorsi S."/>
            <person name="Bouchier C."/>
            <person name="Bouvet O."/>
            <person name="Calteau A."/>
            <person name="Chiapello H."/>
            <person name="Clermont O."/>
            <person name="Cruveiller S."/>
            <person name="Danchin A."/>
            <person name="Diard M."/>
            <person name="Dossat C."/>
            <person name="Karoui M.E."/>
            <person name="Frapy E."/>
            <person name="Garry L."/>
            <person name="Ghigo J.M."/>
            <person name="Gilles A.M."/>
            <person name="Johnson J."/>
            <person name="Le Bouguenec C."/>
            <person name="Lescat M."/>
            <person name="Mangenot S."/>
            <person name="Martinez-Jehanne V."/>
            <person name="Matic I."/>
            <person name="Nassif X."/>
            <person name="Oztas S."/>
            <person name="Petit M.A."/>
            <person name="Pichon C."/>
            <person name="Rouy Z."/>
            <person name="Ruf C.S."/>
            <person name="Schneider D."/>
            <person name="Tourret J."/>
            <person name="Vacherie B."/>
            <person name="Vallenet D."/>
            <person name="Medigue C."/>
            <person name="Rocha E.P.C."/>
            <person name="Denamur E."/>
        </authorList>
    </citation>
    <scope>NUCLEOTIDE SEQUENCE [LARGE SCALE GENOMIC DNA]</scope>
    <source>
        <strain>ATCC 35469 / DSM 13698 / BCRC 15582 / CCUG 18766 / IAM 14443 / JCM 21226 / LMG 7866 / NBRC 102419 / NCTC 12128 / CDC 0568-73</strain>
    </source>
</reference>
<protein>
    <recommendedName>
        <fullName evidence="1">Methylglyoxal synthase</fullName>
        <shortName evidence="1">MGS</shortName>
        <ecNumber evidence="1">4.2.3.3</ecNumber>
    </recommendedName>
</protein>
<sequence>MELTTRTLPARKHIALVAHDHCKQMLMNWVERHQPLLEKHVLYATGTTGNLIQRATGLEVNAMLSGPMGGDQQVGALISEGKIDVLIFFWDPLNAVPHDPDVKALLRLATVWNIPVATNVATADFIIQSPHFNDPVDILIPDYQRYLAERLK</sequence>
<dbReference type="EC" id="4.2.3.3" evidence="1"/>
<dbReference type="EMBL" id="CU928158">
    <property type="protein sequence ID" value="CAQ88629.1"/>
    <property type="molecule type" value="Genomic_DNA"/>
</dbReference>
<dbReference type="RefSeq" id="WP_000424177.1">
    <property type="nucleotide sequence ID" value="NC_011740.1"/>
</dbReference>
<dbReference type="SMR" id="B7LNX3"/>
<dbReference type="GeneID" id="75057849"/>
<dbReference type="KEGG" id="efe:EFER_1100"/>
<dbReference type="HOGENOM" id="CLU_120420_0_1_6"/>
<dbReference type="OrthoDB" id="9787147at2"/>
<dbReference type="Proteomes" id="UP000000745">
    <property type="component" value="Chromosome"/>
</dbReference>
<dbReference type="GO" id="GO:0005829">
    <property type="term" value="C:cytosol"/>
    <property type="evidence" value="ECO:0007669"/>
    <property type="project" value="TreeGrafter"/>
</dbReference>
<dbReference type="GO" id="GO:0008929">
    <property type="term" value="F:methylglyoxal synthase activity"/>
    <property type="evidence" value="ECO:0007669"/>
    <property type="project" value="UniProtKB-UniRule"/>
</dbReference>
<dbReference type="GO" id="GO:0019242">
    <property type="term" value="P:methylglyoxal biosynthetic process"/>
    <property type="evidence" value="ECO:0007669"/>
    <property type="project" value="UniProtKB-UniRule"/>
</dbReference>
<dbReference type="CDD" id="cd01422">
    <property type="entry name" value="MGS"/>
    <property type="match status" value="1"/>
</dbReference>
<dbReference type="FunFam" id="3.40.50.1380:FF:000002">
    <property type="entry name" value="Methylglyoxal synthase"/>
    <property type="match status" value="1"/>
</dbReference>
<dbReference type="Gene3D" id="3.40.50.1380">
    <property type="entry name" value="Methylglyoxal synthase-like domain"/>
    <property type="match status" value="1"/>
</dbReference>
<dbReference type="HAMAP" id="MF_00549">
    <property type="entry name" value="Methylglyoxal_synth"/>
    <property type="match status" value="1"/>
</dbReference>
<dbReference type="InterPro" id="IPR004363">
    <property type="entry name" value="Methylgl_synth"/>
</dbReference>
<dbReference type="InterPro" id="IPR018148">
    <property type="entry name" value="Methylglyoxal_synth_AS"/>
</dbReference>
<dbReference type="InterPro" id="IPR011607">
    <property type="entry name" value="MGS-like_dom"/>
</dbReference>
<dbReference type="InterPro" id="IPR036914">
    <property type="entry name" value="MGS-like_dom_sf"/>
</dbReference>
<dbReference type="NCBIfam" id="TIGR00160">
    <property type="entry name" value="MGSA"/>
    <property type="match status" value="1"/>
</dbReference>
<dbReference type="NCBIfam" id="NF003559">
    <property type="entry name" value="PRK05234.1"/>
    <property type="match status" value="1"/>
</dbReference>
<dbReference type="PANTHER" id="PTHR30492">
    <property type="entry name" value="METHYLGLYOXAL SYNTHASE"/>
    <property type="match status" value="1"/>
</dbReference>
<dbReference type="PANTHER" id="PTHR30492:SF0">
    <property type="entry name" value="METHYLGLYOXAL SYNTHASE"/>
    <property type="match status" value="1"/>
</dbReference>
<dbReference type="Pfam" id="PF02142">
    <property type="entry name" value="MGS"/>
    <property type="match status" value="1"/>
</dbReference>
<dbReference type="PIRSF" id="PIRSF006614">
    <property type="entry name" value="Methylglyox_syn"/>
    <property type="match status" value="1"/>
</dbReference>
<dbReference type="SMART" id="SM00851">
    <property type="entry name" value="MGS"/>
    <property type="match status" value="1"/>
</dbReference>
<dbReference type="SUPFAM" id="SSF52335">
    <property type="entry name" value="Methylglyoxal synthase-like"/>
    <property type="match status" value="1"/>
</dbReference>
<dbReference type="PROSITE" id="PS01335">
    <property type="entry name" value="METHYLGLYOXAL_SYNTH"/>
    <property type="match status" value="1"/>
</dbReference>
<dbReference type="PROSITE" id="PS51855">
    <property type="entry name" value="MGS"/>
    <property type="match status" value="1"/>
</dbReference>
<proteinExistence type="inferred from homology"/>